<accession>Q5W266</accession>
<keyword id="KW-0045">Antibiotic biosynthesis</keyword>
<keyword id="KW-0489">Methyltransferase</keyword>
<keyword id="KW-0949">S-adenosyl-L-methionine</keyword>
<keyword id="KW-0808">Transferase</keyword>
<gene>
    <name evidence="3" type="primary">pigF</name>
</gene>
<sequence length="348" mass="38942">MTLTKQDAVNQMMGFFQSKTLITALSLKLFDHLRDQDRNAKQMAALLNCPLRSSEQLLIALQAMGYLEKQDGLYHLPQEHRAFLVSDEPQWLGWLGRHIDTFLYPLWGELKAAVENDTHQRQTVFGDDRSWFDILYQNPDDVTDFQEFLGKFAAPFIDGFIQDYDFSQHQAFLDIGSGIGSLPIAVANAYSGVNLAICELPQTSTFLRDKLVQQGYGQRIQVLEGDVISGDLPIGDYDLIHLGWMLHDYAPETQLIILKNIYDAMPVGGRFIASETPLNADKSGPEFTALLSLNMLVSTDGGIESSPQEYLSRFHQAGFSNARIMDISGPRTLIVGEKTTHNNGSSQC</sequence>
<evidence type="ECO:0000255" key="1">
    <source>
        <dbReference type="PROSITE-ProRule" id="PRU01020"/>
    </source>
</evidence>
<evidence type="ECO:0000269" key="2">
    <source>
    </source>
</evidence>
<evidence type="ECO:0000303" key="3">
    <source>
    </source>
</evidence>
<evidence type="ECO:0000303" key="4">
    <source>
    </source>
</evidence>
<evidence type="ECO:0000305" key="5">
    <source>
    </source>
</evidence>
<feature type="chain" id="PRO_0000436243" description="S-adenosyl-L-methionine-dependent methyl transferase PigF">
    <location>
        <begin position="1"/>
        <end position="348"/>
    </location>
</feature>
<feature type="active site" description="Proton acceptor" evidence="1">
    <location>
        <position position="247"/>
    </location>
</feature>
<feature type="binding site" evidence="1">
    <location>
        <position position="199"/>
    </location>
    <ligand>
        <name>S-adenosyl-L-methionine</name>
        <dbReference type="ChEBI" id="CHEBI:59789"/>
    </ligand>
</feature>
<protein>
    <recommendedName>
        <fullName evidence="4">S-adenosyl-L-methionine-dependent methyl transferase PigF</fullName>
        <ecNumber evidence="1 5">2.1.1.-</ecNumber>
    </recommendedName>
</protein>
<dbReference type="EC" id="2.1.1.-" evidence="1 5"/>
<dbReference type="EMBL" id="AJ833001">
    <property type="protein sequence ID" value="CAH55634.1"/>
    <property type="molecule type" value="Genomic_DNA"/>
</dbReference>
<dbReference type="RefSeq" id="WP_021014644.1">
    <property type="nucleotide sequence ID" value="NZ_CP025084.1"/>
</dbReference>
<dbReference type="SMR" id="Q5W266"/>
<dbReference type="STRING" id="104623.Ser39006_01374"/>
<dbReference type="KEGG" id="ag:CAH55634"/>
<dbReference type="eggNOG" id="COG1414">
    <property type="taxonomic scope" value="Bacteria"/>
</dbReference>
<dbReference type="eggNOG" id="COG4123">
    <property type="taxonomic scope" value="Bacteria"/>
</dbReference>
<dbReference type="OrthoDB" id="9766840at2"/>
<dbReference type="UniPathway" id="UPA01072"/>
<dbReference type="GO" id="GO:0008171">
    <property type="term" value="F:O-methyltransferase activity"/>
    <property type="evidence" value="ECO:0000315"/>
    <property type="project" value="UniProtKB"/>
</dbReference>
<dbReference type="GO" id="GO:0046983">
    <property type="term" value="F:protein dimerization activity"/>
    <property type="evidence" value="ECO:0007669"/>
    <property type="project" value="InterPro"/>
</dbReference>
<dbReference type="GO" id="GO:0017000">
    <property type="term" value="P:antibiotic biosynthetic process"/>
    <property type="evidence" value="ECO:0000315"/>
    <property type="project" value="UniProtKB"/>
</dbReference>
<dbReference type="GO" id="GO:0032259">
    <property type="term" value="P:methylation"/>
    <property type="evidence" value="ECO:0007669"/>
    <property type="project" value="UniProtKB-KW"/>
</dbReference>
<dbReference type="CDD" id="cd02440">
    <property type="entry name" value="AdoMet_MTases"/>
    <property type="match status" value="1"/>
</dbReference>
<dbReference type="Gene3D" id="3.40.50.150">
    <property type="entry name" value="Vaccinia Virus protein VP39"/>
    <property type="match status" value="1"/>
</dbReference>
<dbReference type="Gene3D" id="1.10.10.10">
    <property type="entry name" value="Winged helix-like DNA-binding domain superfamily/Winged helix DNA-binding domain"/>
    <property type="match status" value="1"/>
</dbReference>
<dbReference type="InterPro" id="IPR016461">
    <property type="entry name" value="COMT-like"/>
</dbReference>
<dbReference type="InterPro" id="IPR001077">
    <property type="entry name" value="O_MeTrfase_dom"/>
</dbReference>
<dbReference type="InterPro" id="IPR012967">
    <property type="entry name" value="Plant_O-MeTrfase_dimerisation"/>
</dbReference>
<dbReference type="InterPro" id="IPR029063">
    <property type="entry name" value="SAM-dependent_MTases_sf"/>
</dbReference>
<dbReference type="InterPro" id="IPR036388">
    <property type="entry name" value="WH-like_DNA-bd_sf"/>
</dbReference>
<dbReference type="InterPro" id="IPR036390">
    <property type="entry name" value="WH_DNA-bd_sf"/>
</dbReference>
<dbReference type="PANTHER" id="PTHR43712:SF2">
    <property type="entry name" value="O-METHYLTRANSFERASE CICE"/>
    <property type="match status" value="1"/>
</dbReference>
<dbReference type="PANTHER" id="PTHR43712">
    <property type="entry name" value="PUTATIVE (AFU_ORTHOLOGUE AFUA_4G14580)-RELATED"/>
    <property type="match status" value="1"/>
</dbReference>
<dbReference type="Pfam" id="PF08100">
    <property type="entry name" value="Dimerisation"/>
    <property type="match status" value="1"/>
</dbReference>
<dbReference type="Pfam" id="PF00891">
    <property type="entry name" value="Methyltransf_2"/>
    <property type="match status" value="1"/>
</dbReference>
<dbReference type="PIRSF" id="PIRSF005739">
    <property type="entry name" value="O-mtase"/>
    <property type="match status" value="1"/>
</dbReference>
<dbReference type="SUPFAM" id="SSF53335">
    <property type="entry name" value="S-adenosyl-L-methionine-dependent methyltransferases"/>
    <property type="match status" value="1"/>
</dbReference>
<dbReference type="SUPFAM" id="SSF46785">
    <property type="entry name" value="Winged helix' DNA-binding domain"/>
    <property type="match status" value="1"/>
</dbReference>
<dbReference type="PROSITE" id="PS51683">
    <property type="entry name" value="SAM_OMT_II"/>
    <property type="match status" value="1"/>
</dbReference>
<name>PIGF_SERS3</name>
<organism>
    <name type="scientific">Serratia sp. (strain ATCC 39006)</name>
    <name type="common">Prodigiosinella confusarubida</name>
    <dbReference type="NCBI Taxonomy" id="104623"/>
    <lineage>
        <taxon>Bacteria</taxon>
        <taxon>Pseudomonadati</taxon>
        <taxon>Pseudomonadota</taxon>
        <taxon>Gammaproteobacteria</taxon>
        <taxon>Enterobacterales</taxon>
        <taxon>Pectobacteriaceae</taxon>
        <taxon>Prodigiosinella</taxon>
    </lineage>
</organism>
<reference key="1">
    <citation type="journal article" date="2004" name="Microbiology">
        <title>The Serratia gene cluster encoding biosynthesis of the red antibiotic, prodigiosin, shows species- and strain-dependent genome context variation.</title>
        <authorList>
            <person name="Harris A.K."/>
            <person name="Williamson N.R."/>
            <person name="Slater H."/>
            <person name="Cox A."/>
            <person name="Abbasi S."/>
            <person name="Foulds I."/>
            <person name="Simonsen H.T."/>
            <person name="Leeper F.J."/>
            <person name="Salmond G.P."/>
        </authorList>
    </citation>
    <scope>NUCLEOTIDE SEQUENCE [GENOMIC DNA]</scope>
    <source>
        <strain>ATCC 39006 / SC 11482</strain>
    </source>
</reference>
<reference key="2">
    <citation type="journal article" date="2005" name="Mol. Microbiol.">
        <title>Biosynthesis of the red antibiotic, prodigiosin, in Serratia: identification of a novel 2-methyl-3-n-amyl-pyrrole (MAP) assembly pathway, definition of the terminal condensing enzyme, and implications for undecylprodigiosin biosynthesis in Streptomyces.</title>
        <authorList>
            <person name="Williamson N.R."/>
            <person name="Simonsen H.T."/>
            <person name="Ahmed R.A."/>
            <person name="Goldet G."/>
            <person name="Slater H."/>
            <person name="Woodley L."/>
            <person name="Leeper F.J."/>
            <person name="Salmond G.P."/>
        </authorList>
    </citation>
    <scope>FUNCTION</scope>
    <scope>CATALYTIC ACTIVITY</scope>
    <scope>DISRUPTION PHENOTYPE</scope>
    <scope>PATHWAY</scope>
    <source>
        <strain>ATCC 39006 / SC 11482</strain>
    </source>
</reference>
<proteinExistence type="evidence at protein level"/>
<comment type="function">
    <text evidence="2">Involved in the biosynthesis of 4-methoxy-2,2'-bipyrrole-5-carbaldehyde (MBC), one of the terminal products involved in the biosynthesis of the red antibiotic prodigiosin (Pig). Catalyzes the transfer of a methyl group from S-adenosyl-L-methionine (SAM) to the hydroxyl group of 4-hydroxy-2,2'-bipyrrole-5-carbaldehyde (HBC) to yield 4-methoxy-2,2'-bipyrrole-5-carbaldehyde (MBC).</text>
</comment>
<comment type="pathway">
    <text evidence="5">Antibiotic biosynthesis; prodigiosin biosynthesis.</text>
</comment>
<comment type="disruption phenotype">
    <text evidence="2">Cells lacking this gene show an orange phenotype and produce norprodigiosin.</text>
</comment>
<comment type="similarity">
    <text evidence="1">Belongs to the class I-like SAM-binding methyltransferase superfamily. Cation-independent O-methyltransferase family.</text>
</comment>